<sequence>MTERTLTLAFESSCDETSVAVIENGTKILSNIVATQIDSHQRFGGVVPEVASRHHIEQITKCTNEALEQADVDYNDLDAVAVTYGPGLVGSLLIGVTAAKAIAWAHNLPLVPVNHMAGHIYAARYVGEFQYPQMALLVSGGHTELVYMPSEHEYQIIGETRDDAAGEAYDKIGRVLGVNYPAGKTIDEWAAKGKDTFNFPRAMEKEDNYDFSFSGLKSAFINTVHNADQRGEKLDKYDLAASFQQSVIDVLAEKTMRALDDYPVKQLILAGGVAANHGLRARLDHDMKEFHPDVPMLQAPLKLCGDNAAMIGAAGYVNYKHGDRAGLDLNAVPGLMFDRIQSK</sequence>
<organism>
    <name type="scientific">Limosilactobacillus reuteri (strain DSM 20016)</name>
    <name type="common">Lactobacillus reuteri</name>
    <dbReference type="NCBI Taxonomy" id="557436"/>
    <lineage>
        <taxon>Bacteria</taxon>
        <taxon>Bacillati</taxon>
        <taxon>Bacillota</taxon>
        <taxon>Bacilli</taxon>
        <taxon>Lactobacillales</taxon>
        <taxon>Lactobacillaceae</taxon>
        <taxon>Limosilactobacillus</taxon>
    </lineage>
</organism>
<reference key="1">
    <citation type="journal article" date="2011" name="PLoS Genet.">
        <title>The evolution of host specialization in the vertebrate gut symbiont Lactobacillus reuteri.</title>
        <authorList>
            <person name="Frese S.A."/>
            <person name="Benson A.K."/>
            <person name="Tannock G.W."/>
            <person name="Loach D.M."/>
            <person name="Kim J."/>
            <person name="Zhang M."/>
            <person name="Oh P.L."/>
            <person name="Heng N.C."/>
            <person name="Patil P.B."/>
            <person name="Juge N."/>
            <person name="Mackenzie D.A."/>
            <person name="Pearson B.M."/>
            <person name="Lapidus A."/>
            <person name="Dalin E."/>
            <person name="Tice H."/>
            <person name="Goltsman E."/>
            <person name="Land M."/>
            <person name="Hauser L."/>
            <person name="Ivanova N."/>
            <person name="Kyrpides N.C."/>
            <person name="Walter J."/>
        </authorList>
    </citation>
    <scope>NUCLEOTIDE SEQUENCE [LARGE SCALE GENOMIC DNA]</scope>
    <source>
        <strain>DSM 20016</strain>
    </source>
</reference>
<accession>A5VID8</accession>
<name>TSAD_LIMRD</name>
<gene>
    <name evidence="1" type="primary">tsaD</name>
    <name type="synonym">gcp</name>
    <name type="ordered locus">Lreu_0343</name>
</gene>
<dbReference type="EC" id="2.3.1.234" evidence="1"/>
<dbReference type="EMBL" id="CP000705">
    <property type="protein sequence ID" value="ABQ82612.1"/>
    <property type="molecule type" value="Genomic_DNA"/>
</dbReference>
<dbReference type="RefSeq" id="WP_003667405.1">
    <property type="nucleotide sequence ID" value="NC_009513.1"/>
</dbReference>
<dbReference type="SMR" id="A5VID8"/>
<dbReference type="STRING" id="557436.Lreu_0343"/>
<dbReference type="KEGG" id="lre:Lreu_0343"/>
<dbReference type="PATRIC" id="fig|557436.17.peg.1469"/>
<dbReference type="eggNOG" id="COG0533">
    <property type="taxonomic scope" value="Bacteria"/>
</dbReference>
<dbReference type="HOGENOM" id="CLU_023208_0_2_9"/>
<dbReference type="OMA" id="NAAMIGC"/>
<dbReference type="Proteomes" id="UP000001991">
    <property type="component" value="Chromosome"/>
</dbReference>
<dbReference type="GO" id="GO:0005737">
    <property type="term" value="C:cytoplasm"/>
    <property type="evidence" value="ECO:0007669"/>
    <property type="project" value="UniProtKB-SubCell"/>
</dbReference>
<dbReference type="GO" id="GO:0005506">
    <property type="term" value="F:iron ion binding"/>
    <property type="evidence" value="ECO:0007669"/>
    <property type="project" value="UniProtKB-UniRule"/>
</dbReference>
<dbReference type="GO" id="GO:0061711">
    <property type="term" value="F:N(6)-L-threonylcarbamoyladenine synthase activity"/>
    <property type="evidence" value="ECO:0007669"/>
    <property type="project" value="UniProtKB-EC"/>
</dbReference>
<dbReference type="GO" id="GO:0002949">
    <property type="term" value="P:tRNA threonylcarbamoyladenosine modification"/>
    <property type="evidence" value="ECO:0007669"/>
    <property type="project" value="UniProtKB-UniRule"/>
</dbReference>
<dbReference type="CDD" id="cd24133">
    <property type="entry name" value="ASKHA_NBD_TsaD_bac"/>
    <property type="match status" value="1"/>
</dbReference>
<dbReference type="FunFam" id="3.30.420.40:FF:000012">
    <property type="entry name" value="tRNA N6-adenosine threonylcarbamoyltransferase"/>
    <property type="match status" value="1"/>
</dbReference>
<dbReference type="FunFam" id="3.30.420.40:FF:000040">
    <property type="entry name" value="tRNA N6-adenosine threonylcarbamoyltransferase"/>
    <property type="match status" value="1"/>
</dbReference>
<dbReference type="Gene3D" id="3.30.420.40">
    <property type="match status" value="2"/>
</dbReference>
<dbReference type="HAMAP" id="MF_01445">
    <property type="entry name" value="TsaD"/>
    <property type="match status" value="1"/>
</dbReference>
<dbReference type="InterPro" id="IPR043129">
    <property type="entry name" value="ATPase_NBD"/>
</dbReference>
<dbReference type="InterPro" id="IPR000905">
    <property type="entry name" value="Gcp-like_dom"/>
</dbReference>
<dbReference type="InterPro" id="IPR017861">
    <property type="entry name" value="KAE1/TsaD"/>
</dbReference>
<dbReference type="InterPro" id="IPR017860">
    <property type="entry name" value="Peptidase_M22_CS"/>
</dbReference>
<dbReference type="InterPro" id="IPR022450">
    <property type="entry name" value="TsaD"/>
</dbReference>
<dbReference type="NCBIfam" id="TIGR00329">
    <property type="entry name" value="gcp_kae1"/>
    <property type="match status" value="1"/>
</dbReference>
<dbReference type="NCBIfam" id="TIGR03723">
    <property type="entry name" value="T6A_TsaD_YgjD"/>
    <property type="match status" value="1"/>
</dbReference>
<dbReference type="PANTHER" id="PTHR11735">
    <property type="entry name" value="TRNA N6-ADENOSINE THREONYLCARBAMOYLTRANSFERASE"/>
    <property type="match status" value="1"/>
</dbReference>
<dbReference type="PANTHER" id="PTHR11735:SF6">
    <property type="entry name" value="TRNA N6-ADENOSINE THREONYLCARBAMOYLTRANSFERASE, MITOCHONDRIAL"/>
    <property type="match status" value="1"/>
</dbReference>
<dbReference type="Pfam" id="PF00814">
    <property type="entry name" value="TsaD"/>
    <property type="match status" value="1"/>
</dbReference>
<dbReference type="PRINTS" id="PR00789">
    <property type="entry name" value="OSIALOPTASE"/>
</dbReference>
<dbReference type="SUPFAM" id="SSF53067">
    <property type="entry name" value="Actin-like ATPase domain"/>
    <property type="match status" value="1"/>
</dbReference>
<dbReference type="PROSITE" id="PS01016">
    <property type="entry name" value="GLYCOPROTEASE"/>
    <property type="match status" value="1"/>
</dbReference>
<keyword id="KW-0012">Acyltransferase</keyword>
<keyword id="KW-0963">Cytoplasm</keyword>
<keyword id="KW-0408">Iron</keyword>
<keyword id="KW-0479">Metal-binding</keyword>
<keyword id="KW-1185">Reference proteome</keyword>
<keyword id="KW-0808">Transferase</keyword>
<keyword id="KW-0819">tRNA processing</keyword>
<comment type="function">
    <text evidence="1">Required for the formation of a threonylcarbamoyl group on adenosine at position 37 (t(6)A37) in tRNAs that read codons beginning with adenine. Is involved in the transfer of the threonylcarbamoyl moiety of threonylcarbamoyl-AMP (TC-AMP) to the N6 group of A37, together with TsaE and TsaB. TsaD likely plays a direct catalytic role in this reaction.</text>
</comment>
<comment type="catalytic activity">
    <reaction evidence="1">
        <text>L-threonylcarbamoyladenylate + adenosine(37) in tRNA = N(6)-L-threonylcarbamoyladenosine(37) in tRNA + AMP + H(+)</text>
        <dbReference type="Rhea" id="RHEA:37059"/>
        <dbReference type="Rhea" id="RHEA-COMP:10162"/>
        <dbReference type="Rhea" id="RHEA-COMP:10163"/>
        <dbReference type="ChEBI" id="CHEBI:15378"/>
        <dbReference type="ChEBI" id="CHEBI:73682"/>
        <dbReference type="ChEBI" id="CHEBI:74411"/>
        <dbReference type="ChEBI" id="CHEBI:74418"/>
        <dbReference type="ChEBI" id="CHEBI:456215"/>
        <dbReference type="EC" id="2.3.1.234"/>
    </reaction>
</comment>
<comment type="cofactor">
    <cofactor evidence="1">
        <name>Fe(2+)</name>
        <dbReference type="ChEBI" id="CHEBI:29033"/>
    </cofactor>
    <text evidence="1">Binds 1 Fe(2+) ion per subunit.</text>
</comment>
<comment type="subcellular location">
    <subcellularLocation>
        <location evidence="1">Cytoplasm</location>
    </subcellularLocation>
</comment>
<comment type="similarity">
    <text evidence="1">Belongs to the KAE1 / TsaD family.</text>
</comment>
<protein>
    <recommendedName>
        <fullName evidence="1">tRNA N6-adenosine threonylcarbamoyltransferase</fullName>
        <ecNumber evidence="1">2.3.1.234</ecNumber>
    </recommendedName>
    <alternativeName>
        <fullName evidence="1">N6-L-threonylcarbamoyladenine synthase</fullName>
        <shortName evidence="1">t(6)A synthase</shortName>
    </alternativeName>
    <alternativeName>
        <fullName evidence="1">t(6)A37 threonylcarbamoyladenosine biosynthesis protein TsaD</fullName>
    </alternativeName>
    <alternativeName>
        <fullName evidence="1">tRNA threonylcarbamoyladenosine biosynthesis protein TsaD</fullName>
    </alternativeName>
</protein>
<proteinExistence type="inferred from homology"/>
<feature type="chain" id="PRO_1000145992" description="tRNA N6-adenosine threonylcarbamoyltransferase">
    <location>
        <begin position="1"/>
        <end position="343"/>
    </location>
</feature>
<feature type="binding site" evidence="1">
    <location>
        <position position="115"/>
    </location>
    <ligand>
        <name>Fe cation</name>
        <dbReference type="ChEBI" id="CHEBI:24875"/>
    </ligand>
</feature>
<feature type="binding site" evidence="1">
    <location>
        <position position="119"/>
    </location>
    <ligand>
        <name>Fe cation</name>
        <dbReference type="ChEBI" id="CHEBI:24875"/>
    </ligand>
</feature>
<feature type="binding site" evidence="1">
    <location>
        <begin position="137"/>
        <end position="141"/>
    </location>
    <ligand>
        <name>substrate</name>
    </ligand>
</feature>
<feature type="binding site" evidence="1">
    <location>
        <position position="170"/>
    </location>
    <ligand>
        <name>substrate</name>
    </ligand>
</feature>
<feature type="binding site" evidence="1">
    <location>
        <position position="183"/>
    </location>
    <ligand>
        <name>substrate</name>
    </ligand>
</feature>
<feature type="binding site" evidence="1">
    <location>
        <position position="187"/>
    </location>
    <ligand>
        <name>substrate</name>
    </ligand>
</feature>
<feature type="binding site" evidence="1">
    <location>
        <position position="276"/>
    </location>
    <ligand>
        <name>substrate</name>
    </ligand>
</feature>
<feature type="binding site" evidence="1">
    <location>
        <position position="306"/>
    </location>
    <ligand>
        <name>Fe cation</name>
        <dbReference type="ChEBI" id="CHEBI:24875"/>
    </ligand>
</feature>
<evidence type="ECO:0000255" key="1">
    <source>
        <dbReference type="HAMAP-Rule" id="MF_01445"/>
    </source>
</evidence>